<name>D14L_ORYSJ</name>
<dbReference type="EMBL" id="DP000009">
    <property type="protein sequence ID" value="ABF96818.1"/>
    <property type="molecule type" value="Genomic_DNA"/>
</dbReference>
<dbReference type="EMBL" id="AP008209">
    <property type="protein sequence ID" value="BAF12359.1"/>
    <property type="molecule type" value="Genomic_DNA"/>
</dbReference>
<dbReference type="EMBL" id="AP014959">
    <property type="protein sequence ID" value="BAS84851.1"/>
    <property type="molecule type" value="Genomic_DNA"/>
</dbReference>
<dbReference type="EMBL" id="AP014967">
    <property type="protein sequence ID" value="BAT13755.1"/>
    <property type="molecule type" value="Genomic_DNA"/>
</dbReference>
<dbReference type="EMBL" id="AK061303">
    <property type="protein sequence ID" value="BAG87846.1"/>
    <property type="molecule type" value="mRNA"/>
</dbReference>
<dbReference type="EMBL" id="AK104138">
    <property type="protein sequence ID" value="BAG96447.1"/>
    <property type="molecule type" value="mRNA"/>
</dbReference>
<dbReference type="EMBL" id="AK104400">
    <property type="protein sequence ID" value="BAG96649.1"/>
    <property type="molecule type" value="mRNA"/>
</dbReference>
<dbReference type="RefSeq" id="XP_015631879.1">
    <property type="nucleotide sequence ID" value="XM_015776393.1"/>
</dbReference>
<dbReference type="PDB" id="8VCZ">
    <property type="method" value="X-ray"/>
    <property type="resolution" value="1.68 A"/>
    <property type="chains" value="A=1-271"/>
</dbReference>
<dbReference type="PDB" id="8VD1">
    <property type="method" value="X-ray"/>
    <property type="resolution" value="1.29 A"/>
    <property type="chains" value="A=1-271"/>
</dbReference>
<dbReference type="PDBsum" id="8VCZ"/>
<dbReference type="PDBsum" id="8VD1"/>
<dbReference type="SMR" id="Q10J20"/>
<dbReference type="FunCoup" id="Q10J20">
    <property type="interactions" value="67"/>
</dbReference>
<dbReference type="STRING" id="39947.Q10J20"/>
<dbReference type="ESTHER" id="orysj-q10j20">
    <property type="family name" value="RsbQ-like"/>
</dbReference>
<dbReference type="PaxDb" id="39947-Q10J20"/>
<dbReference type="EnsemblPlants" id="Os03t0437600-01">
    <property type="protein sequence ID" value="Os03t0437600-01"/>
    <property type="gene ID" value="Os03g0437600"/>
</dbReference>
<dbReference type="EnsemblPlants" id="Os03t0437600-02">
    <property type="protein sequence ID" value="Os03t0437600-02"/>
    <property type="gene ID" value="Os03g0437600"/>
</dbReference>
<dbReference type="EnsemblPlants" id="Os11t0384789-01">
    <property type="protein sequence ID" value="Os11t0384789-01"/>
    <property type="gene ID" value="Os11g0384789"/>
</dbReference>
<dbReference type="EnsemblPlants" id="Os11t0384789-02">
    <property type="protein sequence ID" value="Os11t0384789-02"/>
    <property type="gene ID" value="Os11g0384789"/>
</dbReference>
<dbReference type="GeneID" id="4333199"/>
<dbReference type="Gramene" id="Os03t0437600-01">
    <property type="protein sequence ID" value="Os03t0437600-01"/>
    <property type="gene ID" value="Os03g0437600"/>
</dbReference>
<dbReference type="Gramene" id="Os03t0437600-02">
    <property type="protein sequence ID" value="Os03t0437600-02"/>
    <property type="gene ID" value="Os03g0437600"/>
</dbReference>
<dbReference type="Gramene" id="Os11t0384789-01">
    <property type="protein sequence ID" value="Os11t0384789-01"/>
    <property type="gene ID" value="Os11g0384789"/>
</dbReference>
<dbReference type="Gramene" id="Os11t0384789-02">
    <property type="protein sequence ID" value="Os11t0384789-02"/>
    <property type="gene ID" value="Os11g0384789"/>
</dbReference>
<dbReference type="KEGG" id="dosa:Os03g0437600"/>
<dbReference type="KEGG" id="osa:4333199"/>
<dbReference type="eggNOG" id="ENOG502QQIJ">
    <property type="taxonomic scope" value="Eukaryota"/>
</dbReference>
<dbReference type="HOGENOM" id="CLU_020336_30_0_1"/>
<dbReference type="InParanoid" id="Q10J20"/>
<dbReference type="OMA" id="FGCDQSM"/>
<dbReference type="OrthoDB" id="408373at2759"/>
<dbReference type="PlantReactome" id="R-OSA-5654828">
    <property type="pathway name" value="Strigolactone signaling"/>
</dbReference>
<dbReference type="Proteomes" id="UP000000763">
    <property type="component" value="Chromosome 3"/>
</dbReference>
<dbReference type="Proteomes" id="UP000059680">
    <property type="component" value="Chromosome 11"/>
</dbReference>
<dbReference type="Proteomes" id="UP000059680">
    <property type="component" value="Chromosome 3"/>
</dbReference>
<dbReference type="ExpressionAtlas" id="Q10J20">
    <property type="expression patterns" value="baseline and differential"/>
</dbReference>
<dbReference type="GO" id="GO:0005737">
    <property type="term" value="C:cytoplasm"/>
    <property type="evidence" value="ECO:0000314"/>
    <property type="project" value="UniProtKB"/>
</dbReference>
<dbReference type="GO" id="GO:0005634">
    <property type="term" value="C:nucleus"/>
    <property type="evidence" value="ECO:0000314"/>
    <property type="project" value="UniProtKB"/>
</dbReference>
<dbReference type="GO" id="GO:0016787">
    <property type="term" value="F:hydrolase activity"/>
    <property type="evidence" value="ECO:0007669"/>
    <property type="project" value="UniProtKB-KW"/>
</dbReference>
<dbReference type="GO" id="GO:0036377">
    <property type="term" value="P:arbuscular mycorrhizal association"/>
    <property type="evidence" value="ECO:0000315"/>
    <property type="project" value="UniProtKB"/>
</dbReference>
<dbReference type="GO" id="GO:0080167">
    <property type="term" value="P:response to karrikin"/>
    <property type="evidence" value="ECO:0000314"/>
    <property type="project" value="UniProtKB"/>
</dbReference>
<dbReference type="FunFam" id="3.40.50.1820:FF:000042">
    <property type="entry name" value="probable strigolactone esterase DAD2"/>
    <property type="match status" value="1"/>
</dbReference>
<dbReference type="Gene3D" id="3.40.50.1820">
    <property type="entry name" value="alpha/beta hydrolase"/>
    <property type="match status" value="1"/>
</dbReference>
<dbReference type="InterPro" id="IPR000073">
    <property type="entry name" value="AB_hydrolase_1"/>
</dbReference>
<dbReference type="InterPro" id="IPR029058">
    <property type="entry name" value="AB_hydrolase_fold"/>
</dbReference>
<dbReference type="PANTHER" id="PTHR43039">
    <property type="entry name" value="ESTERASE-RELATED"/>
    <property type="match status" value="1"/>
</dbReference>
<dbReference type="Pfam" id="PF12697">
    <property type="entry name" value="Abhydrolase_6"/>
    <property type="match status" value="1"/>
</dbReference>
<dbReference type="SUPFAM" id="SSF53474">
    <property type="entry name" value="alpha/beta-Hydrolases"/>
    <property type="match status" value="1"/>
</dbReference>
<reference key="1">
    <citation type="journal article" date="2005" name="Genome Res.">
        <title>Sequence, annotation, and analysis of synteny between rice chromosome 3 and diverged grass species.</title>
        <authorList>
            <consortium name="The rice chromosome 3 sequencing consortium"/>
            <person name="Buell C.R."/>
            <person name="Yuan Q."/>
            <person name="Ouyang S."/>
            <person name="Liu J."/>
            <person name="Zhu W."/>
            <person name="Wang A."/>
            <person name="Maiti R."/>
            <person name="Haas B."/>
            <person name="Wortman J."/>
            <person name="Pertea M."/>
            <person name="Jones K.M."/>
            <person name="Kim M."/>
            <person name="Overton L."/>
            <person name="Tsitrin T."/>
            <person name="Fadrosh D."/>
            <person name="Bera J."/>
            <person name="Weaver B."/>
            <person name="Jin S."/>
            <person name="Johri S."/>
            <person name="Reardon M."/>
            <person name="Webb K."/>
            <person name="Hill J."/>
            <person name="Moffat K."/>
            <person name="Tallon L."/>
            <person name="Van Aken S."/>
            <person name="Lewis M."/>
            <person name="Utterback T."/>
            <person name="Feldblyum T."/>
            <person name="Zismann V."/>
            <person name="Iobst S."/>
            <person name="Hsiao J."/>
            <person name="de Vazeille A.R."/>
            <person name="Salzberg S.L."/>
            <person name="White O."/>
            <person name="Fraser C.M."/>
            <person name="Yu Y."/>
            <person name="Kim H."/>
            <person name="Rambo T."/>
            <person name="Currie J."/>
            <person name="Collura K."/>
            <person name="Kernodle-Thompson S."/>
            <person name="Wei F."/>
            <person name="Kudrna K."/>
            <person name="Ammiraju J.S.S."/>
            <person name="Luo M."/>
            <person name="Goicoechea J.L."/>
            <person name="Wing R.A."/>
            <person name="Henry D."/>
            <person name="Oates R."/>
            <person name="Palmer M."/>
            <person name="Pries G."/>
            <person name="Saski C."/>
            <person name="Simmons J."/>
            <person name="Soderlund C."/>
            <person name="Nelson W."/>
            <person name="de la Bastide M."/>
            <person name="Spiegel L."/>
            <person name="Nascimento L."/>
            <person name="Huang E."/>
            <person name="Preston R."/>
            <person name="Zutavern T."/>
            <person name="Palmer L."/>
            <person name="O'Shaughnessy A."/>
            <person name="Dike S."/>
            <person name="McCombie W.R."/>
            <person name="Minx P."/>
            <person name="Cordum H."/>
            <person name="Wilson R."/>
            <person name="Jin W."/>
            <person name="Lee H.R."/>
            <person name="Jiang J."/>
            <person name="Jackson S."/>
        </authorList>
    </citation>
    <scope>NUCLEOTIDE SEQUENCE [LARGE SCALE GENOMIC DNA] (OS03G0437600)</scope>
    <source>
        <strain>cv. Nipponbare</strain>
    </source>
</reference>
<reference key="2">
    <citation type="journal article" date="2005" name="Nature">
        <title>The map-based sequence of the rice genome.</title>
        <authorList>
            <consortium name="International rice genome sequencing project (IRGSP)"/>
        </authorList>
    </citation>
    <scope>NUCLEOTIDE SEQUENCE [LARGE SCALE GENOMIC DNA] (OS03G0437600 AND OS11G0384789)</scope>
    <source>
        <strain>cv. Nipponbare</strain>
    </source>
</reference>
<reference key="3">
    <citation type="journal article" date="2008" name="Nucleic Acids Res.">
        <title>The rice annotation project database (RAP-DB): 2008 update.</title>
        <authorList>
            <consortium name="The rice annotation project (RAP)"/>
        </authorList>
    </citation>
    <scope>GENOME REANNOTATION</scope>
    <source>
        <strain>cv. Nipponbare</strain>
    </source>
</reference>
<reference key="4">
    <citation type="journal article" date="2013" name="Rice">
        <title>Improvement of the Oryza sativa Nipponbare reference genome using next generation sequence and optical map data.</title>
        <authorList>
            <person name="Kawahara Y."/>
            <person name="de la Bastide M."/>
            <person name="Hamilton J.P."/>
            <person name="Kanamori H."/>
            <person name="McCombie W.R."/>
            <person name="Ouyang S."/>
            <person name="Schwartz D.C."/>
            <person name="Tanaka T."/>
            <person name="Wu J."/>
            <person name="Zhou S."/>
            <person name="Childs K.L."/>
            <person name="Davidson R.M."/>
            <person name="Lin H."/>
            <person name="Quesada-Ocampo L."/>
            <person name="Vaillancourt B."/>
            <person name="Sakai H."/>
            <person name="Lee S.S."/>
            <person name="Kim J."/>
            <person name="Numa H."/>
            <person name="Itoh T."/>
            <person name="Buell C.R."/>
            <person name="Matsumoto T."/>
        </authorList>
    </citation>
    <scope>GENOME REANNOTATION</scope>
    <source>
        <strain>cv. Nipponbare</strain>
    </source>
</reference>
<reference key="5">
    <citation type="journal article" date="2003" name="Science">
        <title>Collection, mapping, and annotation of over 28,000 cDNA clones from japonica rice.</title>
        <authorList>
            <consortium name="The rice full-length cDNA consortium"/>
        </authorList>
    </citation>
    <scope>NUCLEOTIDE SEQUENCE [LARGE SCALE MRNA] (OS03G0437600 AND OS11G0384789)</scope>
    <source>
        <strain>cv. Nipponbare</strain>
    </source>
</reference>
<reference key="6">
    <citation type="journal article" date="2015" name="Science">
        <title>Rice perception of symbiotic arbuscular mycorrhizal fungi requires the karrikin receptor complex.</title>
        <authorList>
            <person name="Gutjahr C."/>
            <person name="Gobbato E."/>
            <person name="Choi J."/>
            <person name="Riemann M."/>
            <person name="Johnston M.G."/>
            <person name="Summers W."/>
            <person name="Carbonnel S."/>
            <person name="Mansfield C."/>
            <person name="Yang S.Y."/>
            <person name="Nadal M."/>
            <person name="Acosta I."/>
            <person name="Takano M."/>
            <person name="Jiao W.B."/>
            <person name="Schneeberger K."/>
            <person name="Kelly K.A."/>
            <person name="Paszkowski U."/>
        </authorList>
    </citation>
    <scope>FUNCTION</scope>
    <scope>DISRUPTION PHENOTYPE</scope>
    <scope>SUBCELLULAR LOCATION</scope>
    <scope>TISSUE SPECIFICITY</scope>
    <scope>SUBUNIT</scope>
    <source>
        <strain>cv. Nihonmasari</strain>
        <strain>cv. Nipponbare</strain>
    </source>
</reference>
<feature type="chain" id="PRO_0000422057" description="Probable esterase D14L">
    <location>
        <begin position="1"/>
        <end position="271"/>
    </location>
</feature>
<feature type="active site" description="Nucleophile" evidence="1">
    <location>
        <position position="96"/>
    </location>
</feature>
<feature type="active site" evidence="1">
    <location>
        <position position="218"/>
    </location>
</feature>
<feature type="active site" evidence="1">
    <location>
        <position position="247"/>
    </location>
</feature>
<feature type="helix" evidence="9">
    <location>
        <begin position="3"/>
        <end position="8"/>
    </location>
</feature>
<feature type="strand" evidence="9">
    <location>
        <begin position="11"/>
        <end position="13"/>
    </location>
</feature>
<feature type="strand" evidence="9">
    <location>
        <begin position="17"/>
        <end position="24"/>
    </location>
</feature>
<feature type="helix" evidence="9">
    <location>
        <begin position="31"/>
        <end position="34"/>
    </location>
</feature>
<feature type="turn" evidence="9">
    <location>
        <begin position="35"/>
        <end position="37"/>
    </location>
</feature>
<feature type="helix" evidence="9">
    <location>
        <begin position="38"/>
        <end position="40"/>
    </location>
</feature>
<feature type="turn" evidence="9">
    <location>
        <begin position="41"/>
        <end position="44"/>
    </location>
</feature>
<feature type="strand" evidence="9">
    <location>
        <begin position="45"/>
        <end position="49"/>
    </location>
</feature>
<feature type="helix" evidence="9">
    <location>
        <begin position="60"/>
        <end position="62"/>
    </location>
</feature>
<feature type="turn" evidence="9">
    <location>
        <begin position="65"/>
        <end position="68"/>
    </location>
</feature>
<feature type="helix" evidence="9">
    <location>
        <begin position="72"/>
        <end position="85"/>
    </location>
</feature>
<feature type="strand" evidence="9">
    <location>
        <begin position="90"/>
        <end position="95"/>
    </location>
</feature>
<feature type="helix" evidence="9">
    <location>
        <begin position="97"/>
        <end position="108"/>
    </location>
</feature>
<feature type="helix" evidence="9">
    <location>
        <begin position="110"/>
        <end position="112"/>
    </location>
</feature>
<feature type="strand" evidence="9">
    <location>
        <begin position="113"/>
        <end position="120"/>
    </location>
</feature>
<feature type="strand" evidence="9">
    <location>
        <begin position="123"/>
        <end position="126"/>
    </location>
</feature>
<feature type="helix" evidence="9">
    <location>
        <begin position="137"/>
        <end position="149"/>
    </location>
</feature>
<feature type="helix" evidence="9">
    <location>
        <begin position="151"/>
        <end position="163"/>
    </location>
</feature>
<feature type="helix" evidence="9">
    <location>
        <begin position="170"/>
        <end position="181"/>
    </location>
</feature>
<feature type="helix" evidence="9">
    <location>
        <begin position="184"/>
        <end position="195"/>
    </location>
</feature>
<feature type="helix" evidence="9">
    <location>
        <begin position="200"/>
        <end position="205"/>
    </location>
</feature>
<feature type="strand" evidence="9">
    <location>
        <begin position="210"/>
        <end position="217"/>
    </location>
</feature>
<feature type="helix" evidence="9">
    <location>
        <begin position="224"/>
        <end position="232"/>
    </location>
</feature>
<feature type="strand" evidence="9">
    <location>
        <begin position="237"/>
        <end position="247"/>
    </location>
</feature>
<feature type="helix" evidence="9">
    <location>
        <begin position="249"/>
        <end position="252"/>
    </location>
</feature>
<feature type="helix" evidence="9">
    <location>
        <begin position="254"/>
        <end position="266"/>
    </location>
</feature>
<comment type="function">
    <text evidence="1 2 3">May be involved in strigolactone signaling pathway (By similarity). Essential for plant responses to karrikins, a class of butenolide compounds, structurally similar to strigolactones, released from burning vegetation that stimulate seed germination and enhance seedling photomorphogenesis. Mediates a specific perception of karrikin. Required for the establishment of symbiosis with the arbuscular mycorrhizal fungi (AMF) Rhizophagus irregularis and Gigaspora rosea (PubMed:26680197). Karrikin binding induces a conformational change (By similarity).</text>
</comment>
<comment type="subunit">
    <text evidence="6">Component of an intracellular receptor complex involved in the detection of the smoke compound karrikin.</text>
</comment>
<comment type="subcellular location">
    <subcellularLocation>
        <location evidence="3">Nucleus</location>
    </subcellularLocation>
    <subcellularLocation>
        <location evidence="3">Cytoplasm</location>
    </subcellularLocation>
</comment>
<comment type="tissue specificity">
    <text evidence="3">Expressed constitutively in all organs (e.g. roots, stems, leaves, panicles and embryos).</text>
</comment>
<comment type="disruption phenotype">
    <text evidence="3">Loss of responsiveness to and symbiosis with the arbuscular mycorrhizal fungi (AMF) Rhizophagus irregularis and Gigaspora rosea characterized by the absence of physical contact and of characteristic transcriptional responses to fungal signals.</text>
</comment>
<comment type="similarity">
    <text evidence="5">Belongs to the AB hydrolase superfamily.</text>
</comment>
<keyword id="KW-0002">3D-structure</keyword>
<keyword id="KW-0963">Cytoplasm</keyword>
<keyword id="KW-0378">Hydrolase</keyword>
<keyword id="KW-0539">Nucleus</keyword>
<keyword id="KW-1185">Reference proteome</keyword>
<gene>
    <name type="primary">D14L</name>
    <name evidence="7" type="ordered locus">Os03g0437600</name>
    <name evidence="5" type="ordered locus">LOC_Os03g32270</name>
</gene>
<gene>
    <name evidence="8" type="ordered locus">Os11g0384789</name>
</gene>
<organism>
    <name type="scientific">Oryza sativa subsp. japonica</name>
    <name type="common">Rice</name>
    <dbReference type="NCBI Taxonomy" id="39947"/>
    <lineage>
        <taxon>Eukaryota</taxon>
        <taxon>Viridiplantae</taxon>
        <taxon>Streptophyta</taxon>
        <taxon>Embryophyta</taxon>
        <taxon>Tracheophyta</taxon>
        <taxon>Spermatophyta</taxon>
        <taxon>Magnoliopsida</taxon>
        <taxon>Liliopsida</taxon>
        <taxon>Poales</taxon>
        <taxon>Poaceae</taxon>
        <taxon>BOP clade</taxon>
        <taxon>Oryzoideae</taxon>
        <taxon>Oryzeae</taxon>
        <taxon>Oryzinae</taxon>
        <taxon>Oryza</taxon>
        <taxon>Oryza sativa</taxon>
    </lineage>
</organism>
<accession>Q10J20</accession>
<accession>A0A0P0Y1L3</accession>
<protein>
    <recommendedName>
        <fullName>Probable esterase D14L</fullName>
    </recommendedName>
    <alternativeName>
        <fullName>Protein DWARF-14-like</fullName>
        <shortName>Protein D14-like</shortName>
    </alternativeName>
    <alternativeName>
        <fullName evidence="4">Protein HEBIBA D14L</fullName>
    </alternativeName>
</protein>
<proteinExistence type="evidence at protein level"/>
<evidence type="ECO:0000250" key="1">
    <source>
        <dbReference type="UniProtKB" id="Q10QA5"/>
    </source>
</evidence>
<evidence type="ECO:0000250" key="2">
    <source>
        <dbReference type="UniProtKB" id="Q9SZU7"/>
    </source>
</evidence>
<evidence type="ECO:0000269" key="3">
    <source>
    </source>
</evidence>
<evidence type="ECO:0000303" key="4">
    <source>
    </source>
</evidence>
<evidence type="ECO:0000305" key="5"/>
<evidence type="ECO:0000305" key="6">
    <source>
    </source>
</evidence>
<evidence type="ECO:0000312" key="7">
    <source>
        <dbReference type="EMBL" id="BAS84851.1"/>
    </source>
</evidence>
<evidence type="ECO:0000312" key="8">
    <source>
        <dbReference type="EMBL" id="BAT13755.1"/>
    </source>
</evidence>
<evidence type="ECO:0007829" key="9">
    <source>
        <dbReference type="PDB" id="8VD1"/>
    </source>
</evidence>
<sequence>MGIVEEAHNLRVVGEGKRGVIVLAHGFGTDQSVWKHLVPHLVADYRVVLFDTMGAGPTNPDYFDFSRYATLEGYALDLLAILQELRVASCIYVGHSVSAVIGAIASISRPDLFSKLVLLSASPRYLNDVDYYGGFEQEDLDELFEAMGSNYKAWCSGFAPLCVGGDMESVAVQEFSRTLFNIRPDIALSVAQTIFQSDVRSLLPLVTVPCHIVQSTKDLAVPVVVSEYLHKHLGGDSIVEVMPSEGHLPQLSSPDIVIPVLLRHIQHDIAV</sequence>